<name>RS7_DESRM</name>
<protein>
    <recommendedName>
        <fullName evidence="1">Small ribosomal subunit protein uS7</fullName>
    </recommendedName>
    <alternativeName>
        <fullName evidence="2">30S ribosomal protein S7</fullName>
    </alternativeName>
</protein>
<organism>
    <name type="scientific">Desulforamulus reducens (strain ATCC BAA-1160 / DSM 100696 / MI-1)</name>
    <name type="common">Desulfotomaculum reducens</name>
    <dbReference type="NCBI Taxonomy" id="349161"/>
    <lineage>
        <taxon>Bacteria</taxon>
        <taxon>Bacillati</taxon>
        <taxon>Bacillota</taxon>
        <taxon>Clostridia</taxon>
        <taxon>Eubacteriales</taxon>
        <taxon>Peptococcaceae</taxon>
        <taxon>Desulforamulus</taxon>
    </lineage>
</organism>
<keyword id="KW-1185">Reference proteome</keyword>
<keyword id="KW-0687">Ribonucleoprotein</keyword>
<keyword id="KW-0689">Ribosomal protein</keyword>
<keyword id="KW-0694">RNA-binding</keyword>
<keyword id="KW-0699">rRNA-binding</keyword>
<keyword id="KW-0820">tRNA-binding</keyword>
<proteinExistence type="inferred from homology"/>
<accession>A4J107</accession>
<evidence type="ECO:0000255" key="1">
    <source>
        <dbReference type="HAMAP-Rule" id="MF_00480"/>
    </source>
</evidence>
<evidence type="ECO:0000305" key="2"/>
<dbReference type="EMBL" id="CP000612">
    <property type="protein sequence ID" value="ABO48760.1"/>
    <property type="molecule type" value="Genomic_DNA"/>
</dbReference>
<dbReference type="RefSeq" id="WP_011876601.1">
    <property type="nucleotide sequence ID" value="NC_009253.1"/>
</dbReference>
<dbReference type="SMR" id="A4J107"/>
<dbReference type="STRING" id="349161.Dred_0211"/>
<dbReference type="KEGG" id="drm:Dred_0211"/>
<dbReference type="eggNOG" id="COG0049">
    <property type="taxonomic scope" value="Bacteria"/>
</dbReference>
<dbReference type="HOGENOM" id="CLU_072226_1_1_9"/>
<dbReference type="OrthoDB" id="9807653at2"/>
<dbReference type="Proteomes" id="UP000001556">
    <property type="component" value="Chromosome"/>
</dbReference>
<dbReference type="GO" id="GO:0015935">
    <property type="term" value="C:small ribosomal subunit"/>
    <property type="evidence" value="ECO:0007669"/>
    <property type="project" value="InterPro"/>
</dbReference>
<dbReference type="GO" id="GO:0019843">
    <property type="term" value="F:rRNA binding"/>
    <property type="evidence" value="ECO:0007669"/>
    <property type="project" value="UniProtKB-UniRule"/>
</dbReference>
<dbReference type="GO" id="GO:0003735">
    <property type="term" value="F:structural constituent of ribosome"/>
    <property type="evidence" value="ECO:0007669"/>
    <property type="project" value="InterPro"/>
</dbReference>
<dbReference type="GO" id="GO:0000049">
    <property type="term" value="F:tRNA binding"/>
    <property type="evidence" value="ECO:0007669"/>
    <property type="project" value="UniProtKB-UniRule"/>
</dbReference>
<dbReference type="GO" id="GO:0006412">
    <property type="term" value="P:translation"/>
    <property type="evidence" value="ECO:0007669"/>
    <property type="project" value="UniProtKB-UniRule"/>
</dbReference>
<dbReference type="CDD" id="cd14869">
    <property type="entry name" value="uS7_Bacteria"/>
    <property type="match status" value="1"/>
</dbReference>
<dbReference type="FunFam" id="1.10.455.10:FF:000001">
    <property type="entry name" value="30S ribosomal protein S7"/>
    <property type="match status" value="1"/>
</dbReference>
<dbReference type="Gene3D" id="1.10.455.10">
    <property type="entry name" value="Ribosomal protein S7 domain"/>
    <property type="match status" value="1"/>
</dbReference>
<dbReference type="HAMAP" id="MF_00480_B">
    <property type="entry name" value="Ribosomal_uS7_B"/>
    <property type="match status" value="1"/>
</dbReference>
<dbReference type="InterPro" id="IPR000235">
    <property type="entry name" value="Ribosomal_uS7"/>
</dbReference>
<dbReference type="InterPro" id="IPR005717">
    <property type="entry name" value="Ribosomal_uS7_bac/org-type"/>
</dbReference>
<dbReference type="InterPro" id="IPR020606">
    <property type="entry name" value="Ribosomal_uS7_CS"/>
</dbReference>
<dbReference type="InterPro" id="IPR023798">
    <property type="entry name" value="Ribosomal_uS7_dom"/>
</dbReference>
<dbReference type="InterPro" id="IPR036823">
    <property type="entry name" value="Ribosomal_uS7_dom_sf"/>
</dbReference>
<dbReference type="NCBIfam" id="TIGR01029">
    <property type="entry name" value="rpsG_bact"/>
    <property type="match status" value="1"/>
</dbReference>
<dbReference type="PANTHER" id="PTHR11205">
    <property type="entry name" value="RIBOSOMAL PROTEIN S7"/>
    <property type="match status" value="1"/>
</dbReference>
<dbReference type="Pfam" id="PF00177">
    <property type="entry name" value="Ribosomal_S7"/>
    <property type="match status" value="1"/>
</dbReference>
<dbReference type="PIRSF" id="PIRSF002122">
    <property type="entry name" value="RPS7p_RPS7a_RPS5e_RPS7o"/>
    <property type="match status" value="1"/>
</dbReference>
<dbReference type="SUPFAM" id="SSF47973">
    <property type="entry name" value="Ribosomal protein S7"/>
    <property type="match status" value="1"/>
</dbReference>
<dbReference type="PROSITE" id="PS00052">
    <property type="entry name" value="RIBOSOMAL_S7"/>
    <property type="match status" value="1"/>
</dbReference>
<comment type="function">
    <text evidence="1">One of the primary rRNA binding proteins, it binds directly to 16S rRNA where it nucleates assembly of the head domain of the 30S subunit. Is located at the subunit interface close to the decoding center, probably blocks exit of the E-site tRNA.</text>
</comment>
<comment type="subunit">
    <text evidence="1">Part of the 30S ribosomal subunit. Contacts proteins S9 and S11.</text>
</comment>
<comment type="similarity">
    <text evidence="1">Belongs to the universal ribosomal protein uS7 family.</text>
</comment>
<sequence length="156" mass="17587">MPRRGGIPKRDVLPDPIYGSKIATKLVNQMMLDGKRGVAEKIIYDAFEIIKEKTGKSPLEVFDAAMKNVMPVLEVKARRVGGANYQVPVEVRAERRQTLGIRWMVLFTRKRAGKSMAEKLAAEIMDAANNTGATVKKREDTHKMAEANKAFAHYRW</sequence>
<feature type="chain" id="PRO_1000072405" description="Small ribosomal subunit protein uS7">
    <location>
        <begin position="1"/>
        <end position="156"/>
    </location>
</feature>
<gene>
    <name evidence="1" type="primary">rpsG</name>
    <name type="ordered locus">Dred_0211</name>
</gene>
<reference key="1">
    <citation type="submission" date="2007-03" db="EMBL/GenBank/DDBJ databases">
        <title>Complete sequence of Desulfotomaculum reducens MI-1.</title>
        <authorList>
            <consortium name="US DOE Joint Genome Institute"/>
            <person name="Copeland A."/>
            <person name="Lucas S."/>
            <person name="Lapidus A."/>
            <person name="Barry K."/>
            <person name="Detter J.C."/>
            <person name="Glavina del Rio T."/>
            <person name="Hammon N."/>
            <person name="Israni S."/>
            <person name="Dalin E."/>
            <person name="Tice H."/>
            <person name="Pitluck S."/>
            <person name="Sims D."/>
            <person name="Brettin T."/>
            <person name="Bruce D."/>
            <person name="Han C."/>
            <person name="Tapia R."/>
            <person name="Schmutz J."/>
            <person name="Larimer F."/>
            <person name="Land M."/>
            <person name="Hauser L."/>
            <person name="Kyrpides N."/>
            <person name="Kim E."/>
            <person name="Tebo B.M."/>
            <person name="Richardson P."/>
        </authorList>
    </citation>
    <scope>NUCLEOTIDE SEQUENCE [LARGE SCALE GENOMIC DNA]</scope>
    <source>
        <strain>ATCC BAA-1160 / DSM 100696 / MI-1</strain>
    </source>
</reference>